<dbReference type="EMBL" id="AE016822">
    <property type="protein sequence ID" value="AAT89727.1"/>
    <property type="molecule type" value="Genomic_DNA"/>
</dbReference>
<dbReference type="RefSeq" id="WP_011186713.1">
    <property type="nucleotide sequence ID" value="NC_006087.1"/>
</dbReference>
<dbReference type="SMR" id="Q6AD17"/>
<dbReference type="STRING" id="281090.Lxx20110"/>
<dbReference type="KEGG" id="lxx:Lxx20110"/>
<dbReference type="eggNOG" id="COG0361">
    <property type="taxonomic scope" value="Bacteria"/>
</dbReference>
<dbReference type="HOGENOM" id="CLU_151267_1_0_11"/>
<dbReference type="Proteomes" id="UP000001306">
    <property type="component" value="Chromosome"/>
</dbReference>
<dbReference type="GO" id="GO:0005829">
    <property type="term" value="C:cytosol"/>
    <property type="evidence" value="ECO:0007669"/>
    <property type="project" value="TreeGrafter"/>
</dbReference>
<dbReference type="GO" id="GO:0043022">
    <property type="term" value="F:ribosome binding"/>
    <property type="evidence" value="ECO:0007669"/>
    <property type="project" value="UniProtKB-UniRule"/>
</dbReference>
<dbReference type="GO" id="GO:0019843">
    <property type="term" value="F:rRNA binding"/>
    <property type="evidence" value="ECO:0007669"/>
    <property type="project" value="UniProtKB-UniRule"/>
</dbReference>
<dbReference type="GO" id="GO:0003743">
    <property type="term" value="F:translation initiation factor activity"/>
    <property type="evidence" value="ECO:0007669"/>
    <property type="project" value="UniProtKB-UniRule"/>
</dbReference>
<dbReference type="CDD" id="cd04451">
    <property type="entry name" value="S1_IF1"/>
    <property type="match status" value="1"/>
</dbReference>
<dbReference type="FunFam" id="2.40.50.140:FF:000002">
    <property type="entry name" value="Translation initiation factor IF-1"/>
    <property type="match status" value="1"/>
</dbReference>
<dbReference type="Gene3D" id="2.40.50.140">
    <property type="entry name" value="Nucleic acid-binding proteins"/>
    <property type="match status" value="1"/>
</dbReference>
<dbReference type="HAMAP" id="MF_00075">
    <property type="entry name" value="IF_1"/>
    <property type="match status" value="1"/>
</dbReference>
<dbReference type="InterPro" id="IPR012340">
    <property type="entry name" value="NA-bd_OB-fold"/>
</dbReference>
<dbReference type="InterPro" id="IPR006196">
    <property type="entry name" value="RNA-binding_domain_S1_IF1"/>
</dbReference>
<dbReference type="InterPro" id="IPR004368">
    <property type="entry name" value="TIF_IF1"/>
</dbReference>
<dbReference type="NCBIfam" id="TIGR00008">
    <property type="entry name" value="infA"/>
    <property type="match status" value="1"/>
</dbReference>
<dbReference type="PANTHER" id="PTHR33370">
    <property type="entry name" value="TRANSLATION INITIATION FACTOR IF-1, CHLOROPLASTIC"/>
    <property type="match status" value="1"/>
</dbReference>
<dbReference type="PANTHER" id="PTHR33370:SF1">
    <property type="entry name" value="TRANSLATION INITIATION FACTOR IF-1, CHLOROPLASTIC"/>
    <property type="match status" value="1"/>
</dbReference>
<dbReference type="Pfam" id="PF01176">
    <property type="entry name" value="eIF-1a"/>
    <property type="match status" value="1"/>
</dbReference>
<dbReference type="SUPFAM" id="SSF50249">
    <property type="entry name" value="Nucleic acid-binding proteins"/>
    <property type="match status" value="1"/>
</dbReference>
<dbReference type="PROSITE" id="PS50832">
    <property type="entry name" value="S1_IF1_TYPE"/>
    <property type="match status" value="1"/>
</dbReference>
<protein>
    <recommendedName>
        <fullName evidence="1">Translation initiation factor IF-1</fullName>
    </recommendedName>
</protein>
<gene>
    <name evidence="1" type="primary">infA</name>
    <name type="ordered locus">Lxx20110</name>
</gene>
<feature type="chain" id="PRO_0000095810" description="Translation initiation factor IF-1">
    <location>
        <begin position="1"/>
        <end position="73"/>
    </location>
</feature>
<feature type="domain" description="S1-like" evidence="1">
    <location>
        <begin position="1"/>
        <end position="73"/>
    </location>
</feature>
<comment type="function">
    <text evidence="1">One of the essential components for the initiation of protein synthesis. Stabilizes the binding of IF-2 and IF-3 on the 30S subunit to which N-formylmethionyl-tRNA(fMet) subsequently binds. Helps modulate mRNA selection, yielding the 30S pre-initiation complex (PIC). Upon addition of the 50S ribosomal subunit IF-1, IF-2 and IF-3 are released leaving the mature 70S translation initiation complex.</text>
</comment>
<comment type="subunit">
    <text evidence="1">Component of the 30S ribosomal translation pre-initiation complex which assembles on the 30S ribosome in the order IF-2 and IF-3, IF-1 and N-formylmethionyl-tRNA(fMet); mRNA recruitment can occur at any time during PIC assembly.</text>
</comment>
<comment type="subcellular location">
    <subcellularLocation>
        <location evidence="1">Cytoplasm</location>
    </subcellularLocation>
</comment>
<comment type="similarity">
    <text evidence="1">Belongs to the IF-1 family.</text>
</comment>
<accession>Q6AD17</accession>
<organism>
    <name type="scientific">Leifsonia xyli subsp. xyli (strain CTCB07)</name>
    <dbReference type="NCBI Taxonomy" id="281090"/>
    <lineage>
        <taxon>Bacteria</taxon>
        <taxon>Bacillati</taxon>
        <taxon>Actinomycetota</taxon>
        <taxon>Actinomycetes</taxon>
        <taxon>Micrococcales</taxon>
        <taxon>Microbacteriaceae</taxon>
        <taxon>Leifsonia</taxon>
    </lineage>
</organism>
<proteinExistence type="inferred from homology"/>
<sequence>MAKKDGVIEIEGSVIEALPNAMFRVELTNGHKVLAHISGKMRQHYIRILPEDRVIVELSPYDLTRGRIVYRYK</sequence>
<evidence type="ECO:0000255" key="1">
    <source>
        <dbReference type="HAMAP-Rule" id="MF_00075"/>
    </source>
</evidence>
<keyword id="KW-0963">Cytoplasm</keyword>
<keyword id="KW-0396">Initiation factor</keyword>
<keyword id="KW-0648">Protein biosynthesis</keyword>
<keyword id="KW-1185">Reference proteome</keyword>
<keyword id="KW-0694">RNA-binding</keyword>
<keyword id="KW-0699">rRNA-binding</keyword>
<name>IF1_LEIXX</name>
<reference key="1">
    <citation type="journal article" date="2004" name="Mol. Plant Microbe Interact.">
        <title>The genome sequence of the Gram-positive sugarcane pathogen Leifsonia xyli subsp. xyli.</title>
        <authorList>
            <person name="Monteiro-Vitorello C.B."/>
            <person name="Camargo L.E.A."/>
            <person name="Van Sluys M.A."/>
            <person name="Kitajima J.P."/>
            <person name="Truffi D."/>
            <person name="do Amaral A.M."/>
            <person name="Harakava R."/>
            <person name="de Oliveira J.C.F."/>
            <person name="Wood D."/>
            <person name="de Oliveira M.C."/>
            <person name="Miyaki C.Y."/>
            <person name="Takita M.A."/>
            <person name="da Silva A.C.R."/>
            <person name="Furlan L.R."/>
            <person name="Carraro D.M."/>
            <person name="Camarotte G."/>
            <person name="Almeida N.F. Jr."/>
            <person name="Carrer H."/>
            <person name="Coutinho L.L."/>
            <person name="El-Dorry H.A."/>
            <person name="Ferro M.I.T."/>
            <person name="Gagliardi P.R."/>
            <person name="Giglioti E."/>
            <person name="Goldman M.H.S."/>
            <person name="Goldman G.H."/>
            <person name="Kimura E.T."/>
            <person name="Ferro E.S."/>
            <person name="Kuramae E.E."/>
            <person name="Lemos E.G.M."/>
            <person name="Lemos M.V.F."/>
            <person name="Mauro S.M.Z."/>
            <person name="Machado M.A."/>
            <person name="Marino C.L."/>
            <person name="Menck C.F."/>
            <person name="Nunes L.R."/>
            <person name="Oliveira R.C."/>
            <person name="Pereira G.G."/>
            <person name="Siqueira W."/>
            <person name="de Souza A.A."/>
            <person name="Tsai S.M."/>
            <person name="Zanca A.S."/>
            <person name="Simpson A.J.G."/>
            <person name="Brumbley S.M."/>
            <person name="Setubal J.C."/>
        </authorList>
    </citation>
    <scope>NUCLEOTIDE SEQUENCE [LARGE SCALE GENOMIC DNA]</scope>
    <source>
        <strain>CTCB07</strain>
    </source>
</reference>